<keyword id="KW-0067">ATP-binding</keyword>
<keyword id="KW-0963">Cytoplasm</keyword>
<keyword id="KW-0418">Kinase</keyword>
<keyword id="KW-0460">Magnesium</keyword>
<keyword id="KW-0479">Metal-binding</keyword>
<keyword id="KW-0546">Nucleotide metabolism</keyword>
<keyword id="KW-0547">Nucleotide-binding</keyword>
<keyword id="KW-0597">Phosphoprotein</keyword>
<keyword id="KW-0808">Transferase</keyword>
<feature type="chain" id="PRO_1000026307" description="Nucleoside diphosphate kinase">
    <location>
        <begin position="1"/>
        <end position="147"/>
    </location>
</feature>
<feature type="active site" description="Pros-phosphohistidine intermediate" evidence="1">
    <location>
        <position position="115"/>
    </location>
</feature>
<feature type="binding site" evidence="1">
    <location>
        <position position="9"/>
    </location>
    <ligand>
        <name>ATP</name>
        <dbReference type="ChEBI" id="CHEBI:30616"/>
    </ligand>
</feature>
<feature type="binding site" evidence="1">
    <location>
        <position position="57"/>
    </location>
    <ligand>
        <name>ATP</name>
        <dbReference type="ChEBI" id="CHEBI:30616"/>
    </ligand>
</feature>
<feature type="binding site" evidence="1">
    <location>
        <position position="85"/>
    </location>
    <ligand>
        <name>ATP</name>
        <dbReference type="ChEBI" id="CHEBI:30616"/>
    </ligand>
</feature>
<feature type="binding site" evidence="1">
    <location>
        <position position="91"/>
    </location>
    <ligand>
        <name>ATP</name>
        <dbReference type="ChEBI" id="CHEBI:30616"/>
    </ligand>
</feature>
<feature type="binding site" evidence="1">
    <location>
        <position position="102"/>
    </location>
    <ligand>
        <name>ATP</name>
        <dbReference type="ChEBI" id="CHEBI:30616"/>
    </ligand>
</feature>
<feature type="binding site" evidence="1">
    <location>
        <position position="112"/>
    </location>
    <ligand>
        <name>ATP</name>
        <dbReference type="ChEBI" id="CHEBI:30616"/>
    </ligand>
</feature>
<evidence type="ECO:0000255" key="1">
    <source>
        <dbReference type="HAMAP-Rule" id="MF_00451"/>
    </source>
</evidence>
<dbReference type="EC" id="2.7.4.6" evidence="1"/>
<dbReference type="EMBL" id="CP000716">
    <property type="protein sequence ID" value="ABR30250.1"/>
    <property type="molecule type" value="Genomic_DNA"/>
</dbReference>
<dbReference type="RefSeq" id="WP_012056611.1">
    <property type="nucleotide sequence ID" value="NC_009616.1"/>
</dbReference>
<dbReference type="SMR" id="A6LJZ9"/>
<dbReference type="STRING" id="391009.Tmel_0381"/>
<dbReference type="KEGG" id="tme:Tmel_0381"/>
<dbReference type="eggNOG" id="COG0105">
    <property type="taxonomic scope" value="Bacteria"/>
</dbReference>
<dbReference type="HOGENOM" id="CLU_060216_6_3_0"/>
<dbReference type="OrthoDB" id="9801161at2"/>
<dbReference type="Proteomes" id="UP000001110">
    <property type="component" value="Chromosome"/>
</dbReference>
<dbReference type="GO" id="GO:0005737">
    <property type="term" value="C:cytoplasm"/>
    <property type="evidence" value="ECO:0007669"/>
    <property type="project" value="UniProtKB-SubCell"/>
</dbReference>
<dbReference type="GO" id="GO:0005524">
    <property type="term" value="F:ATP binding"/>
    <property type="evidence" value="ECO:0007669"/>
    <property type="project" value="UniProtKB-UniRule"/>
</dbReference>
<dbReference type="GO" id="GO:0046872">
    <property type="term" value="F:metal ion binding"/>
    <property type="evidence" value="ECO:0007669"/>
    <property type="project" value="UniProtKB-KW"/>
</dbReference>
<dbReference type="GO" id="GO:0004550">
    <property type="term" value="F:nucleoside diphosphate kinase activity"/>
    <property type="evidence" value="ECO:0007669"/>
    <property type="project" value="UniProtKB-UniRule"/>
</dbReference>
<dbReference type="GO" id="GO:0006241">
    <property type="term" value="P:CTP biosynthetic process"/>
    <property type="evidence" value="ECO:0007669"/>
    <property type="project" value="UniProtKB-UniRule"/>
</dbReference>
<dbReference type="GO" id="GO:0006183">
    <property type="term" value="P:GTP biosynthetic process"/>
    <property type="evidence" value="ECO:0007669"/>
    <property type="project" value="UniProtKB-UniRule"/>
</dbReference>
<dbReference type="GO" id="GO:0006228">
    <property type="term" value="P:UTP biosynthetic process"/>
    <property type="evidence" value="ECO:0007669"/>
    <property type="project" value="UniProtKB-UniRule"/>
</dbReference>
<dbReference type="CDD" id="cd04413">
    <property type="entry name" value="NDPk_I"/>
    <property type="match status" value="1"/>
</dbReference>
<dbReference type="FunFam" id="3.30.70.141:FF:000003">
    <property type="entry name" value="Nucleoside diphosphate kinase"/>
    <property type="match status" value="1"/>
</dbReference>
<dbReference type="Gene3D" id="3.30.70.141">
    <property type="entry name" value="Nucleoside diphosphate kinase-like domain"/>
    <property type="match status" value="1"/>
</dbReference>
<dbReference type="HAMAP" id="MF_00451">
    <property type="entry name" value="NDP_kinase"/>
    <property type="match status" value="1"/>
</dbReference>
<dbReference type="InterPro" id="IPR034907">
    <property type="entry name" value="NDK-like_dom"/>
</dbReference>
<dbReference type="InterPro" id="IPR036850">
    <property type="entry name" value="NDK-like_dom_sf"/>
</dbReference>
<dbReference type="InterPro" id="IPR001564">
    <property type="entry name" value="Nucleoside_diP_kinase"/>
</dbReference>
<dbReference type="InterPro" id="IPR023005">
    <property type="entry name" value="Nucleoside_diP_kinase_AS"/>
</dbReference>
<dbReference type="NCBIfam" id="NF001908">
    <property type="entry name" value="PRK00668.1"/>
    <property type="match status" value="1"/>
</dbReference>
<dbReference type="PANTHER" id="PTHR11349">
    <property type="entry name" value="NUCLEOSIDE DIPHOSPHATE KINASE"/>
    <property type="match status" value="1"/>
</dbReference>
<dbReference type="Pfam" id="PF00334">
    <property type="entry name" value="NDK"/>
    <property type="match status" value="1"/>
</dbReference>
<dbReference type="PRINTS" id="PR01243">
    <property type="entry name" value="NUCDPKINASE"/>
</dbReference>
<dbReference type="SMART" id="SM00562">
    <property type="entry name" value="NDK"/>
    <property type="match status" value="1"/>
</dbReference>
<dbReference type="SUPFAM" id="SSF54919">
    <property type="entry name" value="Nucleoside diphosphate kinase, NDK"/>
    <property type="match status" value="1"/>
</dbReference>
<dbReference type="PROSITE" id="PS00469">
    <property type="entry name" value="NDPK"/>
    <property type="match status" value="1"/>
</dbReference>
<dbReference type="PROSITE" id="PS51374">
    <property type="entry name" value="NDPK_LIKE"/>
    <property type="match status" value="1"/>
</dbReference>
<accession>A6LJZ9</accession>
<name>NDK_THEM4</name>
<protein>
    <recommendedName>
        <fullName evidence="1">Nucleoside diphosphate kinase</fullName>
        <shortName evidence="1">NDK</shortName>
        <shortName evidence="1">NDP kinase</shortName>
        <ecNumber evidence="1">2.7.4.6</ecNumber>
    </recommendedName>
    <alternativeName>
        <fullName evidence="1">Nucleoside-2-P kinase</fullName>
    </alternativeName>
</protein>
<proteinExistence type="inferred from homology"/>
<reference key="1">
    <citation type="submission" date="2007-05" db="EMBL/GenBank/DDBJ databases">
        <title>Complete sequence of Thermosipho melanesiensis BI429.</title>
        <authorList>
            <consortium name="US DOE Joint Genome Institute"/>
            <person name="Copeland A."/>
            <person name="Lucas S."/>
            <person name="Lapidus A."/>
            <person name="Barry K."/>
            <person name="Glavina del Rio T."/>
            <person name="Dalin E."/>
            <person name="Tice H."/>
            <person name="Pitluck S."/>
            <person name="Chertkov O."/>
            <person name="Brettin T."/>
            <person name="Bruce D."/>
            <person name="Detter J.C."/>
            <person name="Han C."/>
            <person name="Schmutz J."/>
            <person name="Larimer F."/>
            <person name="Land M."/>
            <person name="Hauser L."/>
            <person name="Kyrpides N."/>
            <person name="Mikhailova N."/>
            <person name="Nelson K."/>
            <person name="Gogarten J.P."/>
            <person name="Noll K."/>
            <person name="Richardson P."/>
        </authorList>
    </citation>
    <scope>NUCLEOTIDE SEQUENCE [LARGE SCALE GENOMIC DNA]</scope>
    <source>
        <strain>DSM 12029 / CIP 104789 / BI429</strain>
    </source>
</reference>
<sequence>MERTFVYLKPNAVRRGLVGEIIKRFEQRGIKIVALKLFWMTREQAERLYEMHKGKNFYNELIEFVTGGPVVAMVVEAPRVIEMVRHIIGNTDPLKAGTGTIRGEFALTVTKNLIHASDSKENFEREYKIFFSENEIVDYYLDVQDDI</sequence>
<comment type="function">
    <text evidence="1">Major role in the synthesis of nucleoside triphosphates other than ATP. The ATP gamma phosphate is transferred to the NDP beta phosphate via a ping-pong mechanism, using a phosphorylated active-site intermediate.</text>
</comment>
<comment type="catalytic activity">
    <reaction evidence="1">
        <text>a 2'-deoxyribonucleoside 5'-diphosphate + ATP = a 2'-deoxyribonucleoside 5'-triphosphate + ADP</text>
        <dbReference type="Rhea" id="RHEA:44640"/>
        <dbReference type="ChEBI" id="CHEBI:30616"/>
        <dbReference type="ChEBI" id="CHEBI:61560"/>
        <dbReference type="ChEBI" id="CHEBI:73316"/>
        <dbReference type="ChEBI" id="CHEBI:456216"/>
        <dbReference type="EC" id="2.7.4.6"/>
    </reaction>
</comment>
<comment type="catalytic activity">
    <reaction evidence="1">
        <text>a ribonucleoside 5'-diphosphate + ATP = a ribonucleoside 5'-triphosphate + ADP</text>
        <dbReference type="Rhea" id="RHEA:18113"/>
        <dbReference type="ChEBI" id="CHEBI:30616"/>
        <dbReference type="ChEBI" id="CHEBI:57930"/>
        <dbReference type="ChEBI" id="CHEBI:61557"/>
        <dbReference type="ChEBI" id="CHEBI:456216"/>
        <dbReference type="EC" id="2.7.4.6"/>
    </reaction>
</comment>
<comment type="cofactor">
    <cofactor evidence="1">
        <name>Mg(2+)</name>
        <dbReference type="ChEBI" id="CHEBI:18420"/>
    </cofactor>
</comment>
<comment type="subunit">
    <text evidence="1">Homotetramer.</text>
</comment>
<comment type="subcellular location">
    <subcellularLocation>
        <location evidence="1">Cytoplasm</location>
    </subcellularLocation>
</comment>
<comment type="similarity">
    <text evidence="1">Belongs to the NDK family.</text>
</comment>
<organism>
    <name type="scientific">Thermosipho melanesiensis (strain DSM 12029 / CIP 104789 / BI429)</name>
    <dbReference type="NCBI Taxonomy" id="391009"/>
    <lineage>
        <taxon>Bacteria</taxon>
        <taxon>Thermotogati</taxon>
        <taxon>Thermotogota</taxon>
        <taxon>Thermotogae</taxon>
        <taxon>Thermotogales</taxon>
        <taxon>Fervidobacteriaceae</taxon>
        <taxon>Thermosipho</taxon>
    </lineage>
</organism>
<gene>
    <name evidence="1" type="primary">ndk</name>
    <name type="ordered locus">Tmel_0381</name>
</gene>